<evidence type="ECO:0000255" key="1">
    <source>
        <dbReference type="HAMAP-Rule" id="MF_00095"/>
    </source>
</evidence>
<proteinExistence type="inferred from homology"/>
<feature type="chain" id="PRO_1000196974" description="Sugar fermentation stimulation protein homolog">
    <location>
        <begin position="1"/>
        <end position="231"/>
    </location>
</feature>
<reference key="1">
    <citation type="submission" date="2009-01" db="EMBL/GenBank/DDBJ databases">
        <title>Complete sequence of Geobacter sp. FRC-32.</title>
        <authorList>
            <consortium name="US DOE Joint Genome Institute"/>
            <person name="Lucas S."/>
            <person name="Copeland A."/>
            <person name="Lapidus A."/>
            <person name="Glavina del Rio T."/>
            <person name="Dalin E."/>
            <person name="Tice H."/>
            <person name="Bruce D."/>
            <person name="Goodwin L."/>
            <person name="Pitluck S."/>
            <person name="Saunders E."/>
            <person name="Brettin T."/>
            <person name="Detter J.C."/>
            <person name="Han C."/>
            <person name="Larimer F."/>
            <person name="Land M."/>
            <person name="Hauser L."/>
            <person name="Kyrpides N."/>
            <person name="Ovchinnikova G."/>
            <person name="Kostka J."/>
            <person name="Richardson P."/>
        </authorList>
    </citation>
    <scope>NUCLEOTIDE SEQUENCE [LARGE SCALE GENOMIC DNA]</scope>
    <source>
        <strain>DSM 22248 / JCM 15807 / FRC-32</strain>
    </source>
</reference>
<gene>
    <name evidence="1" type="primary">sfsA</name>
    <name type="ordered locus">Geob_1066</name>
</gene>
<accession>B9M2P7</accession>
<organism>
    <name type="scientific">Geotalea daltonii (strain DSM 22248 / JCM 15807 / FRC-32)</name>
    <name type="common">Geobacter daltonii</name>
    <dbReference type="NCBI Taxonomy" id="316067"/>
    <lineage>
        <taxon>Bacteria</taxon>
        <taxon>Pseudomonadati</taxon>
        <taxon>Thermodesulfobacteriota</taxon>
        <taxon>Desulfuromonadia</taxon>
        <taxon>Geobacterales</taxon>
        <taxon>Geobacteraceae</taxon>
        <taxon>Geotalea</taxon>
    </lineage>
</organism>
<protein>
    <recommendedName>
        <fullName evidence="1">Sugar fermentation stimulation protein homolog</fullName>
    </recommendedName>
</protein>
<dbReference type="EMBL" id="CP001390">
    <property type="protein sequence ID" value="ACM19426.1"/>
    <property type="molecule type" value="Genomic_DNA"/>
</dbReference>
<dbReference type="RefSeq" id="WP_012646155.1">
    <property type="nucleotide sequence ID" value="NC_011979.1"/>
</dbReference>
<dbReference type="SMR" id="B9M2P7"/>
<dbReference type="STRING" id="316067.Geob_1066"/>
<dbReference type="KEGG" id="geo:Geob_1066"/>
<dbReference type="eggNOG" id="COG1489">
    <property type="taxonomic scope" value="Bacteria"/>
</dbReference>
<dbReference type="HOGENOM" id="CLU_052299_2_0_7"/>
<dbReference type="OrthoDB" id="9802365at2"/>
<dbReference type="Proteomes" id="UP000007721">
    <property type="component" value="Chromosome"/>
</dbReference>
<dbReference type="GO" id="GO:0003677">
    <property type="term" value="F:DNA binding"/>
    <property type="evidence" value="ECO:0007669"/>
    <property type="project" value="InterPro"/>
</dbReference>
<dbReference type="CDD" id="cd22359">
    <property type="entry name" value="SfsA-like_bacterial"/>
    <property type="match status" value="1"/>
</dbReference>
<dbReference type="FunFam" id="3.40.1350.60:FF:000001">
    <property type="entry name" value="Sugar fermentation stimulation protein A"/>
    <property type="match status" value="1"/>
</dbReference>
<dbReference type="Gene3D" id="2.40.50.580">
    <property type="match status" value="1"/>
</dbReference>
<dbReference type="Gene3D" id="3.40.1350.60">
    <property type="match status" value="1"/>
</dbReference>
<dbReference type="HAMAP" id="MF_00095">
    <property type="entry name" value="SfsA"/>
    <property type="match status" value="1"/>
</dbReference>
<dbReference type="InterPro" id="IPR005224">
    <property type="entry name" value="SfsA"/>
</dbReference>
<dbReference type="InterPro" id="IPR040452">
    <property type="entry name" value="SfsA_C"/>
</dbReference>
<dbReference type="InterPro" id="IPR041465">
    <property type="entry name" value="SfsA_N"/>
</dbReference>
<dbReference type="NCBIfam" id="TIGR00230">
    <property type="entry name" value="sfsA"/>
    <property type="match status" value="1"/>
</dbReference>
<dbReference type="PANTHER" id="PTHR30545">
    <property type="entry name" value="SUGAR FERMENTATION STIMULATION PROTEIN A"/>
    <property type="match status" value="1"/>
</dbReference>
<dbReference type="PANTHER" id="PTHR30545:SF2">
    <property type="entry name" value="SUGAR FERMENTATION STIMULATION PROTEIN A"/>
    <property type="match status" value="1"/>
</dbReference>
<dbReference type="Pfam" id="PF03749">
    <property type="entry name" value="SfsA"/>
    <property type="match status" value="1"/>
</dbReference>
<dbReference type="Pfam" id="PF17746">
    <property type="entry name" value="SfsA_N"/>
    <property type="match status" value="1"/>
</dbReference>
<sequence>MYLMPPLIPAVLIRRYQRFLADFQLENGEIVTAHCPNSGSMKGCAVPGSPAFISRCDKPGRKLCYTWEQVKADNCWIGINTSLPNRLVHNAIESNVIKELQGYHSIRPEVRYGINSRIDLLLSRGDELCYVEVKNVTLMEDGRALFPDAATVRGQKHLRELMEMVRLGHRAVNFFVVQRPDCSSVSPADAIDPEYGRLLRLAAANGVELLAYQAQVSRETIHLTHRLPVIL</sequence>
<name>SFSA_GEODF</name>
<comment type="similarity">
    <text evidence="1">Belongs to the SfsA family.</text>
</comment>
<keyword id="KW-1185">Reference proteome</keyword>